<proteinExistence type="inferred from homology"/>
<comment type="subcellular location">
    <subcellularLocation>
        <location evidence="1">Cytoplasm</location>
    </subcellularLocation>
</comment>
<comment type="similarity">
    <text evidence="1">Belongs to the TACO1 family.</text>
</comment>
<organism>
    <name type="scientific">Amoebophilus asiaticus (strain 5a2)</name>
    <dbReference type="NCBI Taxonomy" id="452471"/>
    <lineage>
        <taxon>Bacteria</taxon>
        <taxon>Pseudomonadati</taxon>
        <taxon>Bacteroidota</taxon>
        <taxon>Cytophagia</taxon>
        <taxon>Cytophagales</taxon>
        <taxon>Amoebophilaceae</taxon>
        <taxon>Candidatus Amoebophilus</taxon>
    </lineage>
</organism>
<sequence length="244" mass="26695">MAGHSKWANIKHRKGANDAKKAKYFGKLIREITAAVKQSGNDIEVNPRLRLAIQNAKGANMPKENIDRAINKGSTADTADFTSVVYEGNASHGVALIVECTTDNLNRTVANVRAAFSKHGGSLGKNGSVSFLFDRKGTFSINAADVKDEEALTLALIEAGAEAIEHDQEEGYYHIISSLEDFGSVQKELDNLHLEPVSASLQYIPQNQVELNEETLSKVMKLIEALEDNDDVQKVYHNIANNTE</sequence>
<accession>B3ES20</accession>
<reference key="1">
    <citation type="journal article" date="2010" name="J. Bacteriol.">
        <title>The genome of the amoeba symbiont 'Candidatus Amoebophilus asiaticus' reveals common mechanisms for host cell interaction among amoeba-associated bacteria.</title>
        <authorList>
            <person name="Schmitz-Esser S."/>
            <person name="Tischler P."/>
            <person name="Arnold R."/>
            <person name="Montanaro J."/>
            <person name="Wagner M."/>
            <person name="Rattei T."/>
            <person name="Horn M."/>
        </authorList>
    </citation>
    <scope>NUCLEOTIDE SEQUENCE [LARGE SCALE GENOMIC DNA]</scope>
    <source>
        <strain>5a2</strain>
    </source>
</reference>
<name>Y624_AMOA5</name>
<dbReference type="EMBL" id="CP001102">
    <property type="protein sequence ID" value="ACE06022.1"/>
    <property type="molecule type" value="Genomic_DNA"/>
</dbReference>
<dbReference type="RefSeq" id="WP_012472790.1">
    <property type="nucleotide sequence ID" value="NC_010830.1"/>
</dbReference>
<dbReference type="SMR" id="B3ES20"/>
<dbReference type="STRING" id="452471.Aasi_0624"/>
<dbReference type="KEGG" id="aas:Aasi_0624"/>
<dbReference type="eggNOG" id="COG0217">
    <property type="taxonomic scope" value="Bacteria"/>
</dbReference>
<dbReference type="HOGENOM" id="CLU_062974_3_0_10"/>
<dbReference type="OrthoDB" id="9781053at2"/>
<dbReference type="Proteomes" id="UP000001227">
    <property type="component" value="Chromosome"/>
</dbReference>
<dbReference type="GO" id="GO:0005737">
    <property type="term" value="C:cytoplasm"/>
    <property type="evidence" value="ECO:0007669"/>
    <property type="project" value="UniProtKB-SubCell"/>
</dbReference>
<dbReference type="GO" id="GO:0003677">
    <property type="term" value="F:DNA binding"/>
    <property type="evidence" value="ECO:0007669"/>
    <property type="project" value="UniProtKB-UniRule"/>
</dbReference>
<dbReference type="GO" id="GO:0006355">
    <property type="term" value="P:regulation of DNA-templated transcription"/>
    <property type="evidence" value="ECO:0007669"/>
    <property type="project" value="UniProtKB-UniRule"/>
</dbReference>
<dbReference type="FunFam" id="1.10.10.200:FF:000002">
    <property type="entry name" value="Probable transcriptional regulatory protein CLM62_37755"/>
    <property type="match status" value="1"/>
</dbReference>
<dbReference type="Gene3D" id="1.10.10.200">
    <property type="match status" value="1"/>
</dbReference>
<dbReference type="Gene3D" id="3.30.70.980">
    <property type="match status" value="2"/>
</dbReference>
<dbReference type="HAMAP" id="MF_00693">
    <property type="entry name" value="Transcrip_reg_TACO1"/>
    <property type="match status" value="1"/>
</dbReference>
<dbReference type="InterPro" id="IPR017856">
    <property type="entry name" value="Integrase-like_N"/>
</dbReference>
<dbReference type="InterPro" id="IPR048300">
    <property type="entry name" value="TACO1_YebC-like_2nd/3rd_dom"/>
</dbReference>
<dbReference type="InterPro" id="IPR049083">
    <property type="entry name" value="TACO1_YebC_N"/>
</dbReference>
<dbReference type="InterPro" id="IPR002876">
    <property type="entry name" value="Transcrip_reg_TACO1-like"/>
</dbReference>
<dbReference type="InterPro" id="IPR026564">
    <property type="entry name" value="Transcrip_reg_TACO1-like_dom3"/>
</dbReference>
<dbReference type="InterPro" id="IPR029072">
    <property type="entry name" value="YebC-like"/>
</dbReference>
<dbReference type="NCBIfam" id="NF001030">
    <property type="entry name" value="PRK00110.1"/>
    <property type="match status" value="1"/>
</dbReference>
<dbReference type="NCBIfam" id="NF009044">
    <property type="entry name" value="PRK12378.1"/>
    <property type="match status" value="1"/>
</dbReference>
<dbReference type="NCBIfam" id="TIGR01033">
    <property type="entry name" value="YebC/PmpR family DNA-binding transcriptional regulator"/>
    <property type="match status" value="1"/>
</dbReference>
<dbReference type="PANTHER" id="PTHR12532">
    <property type="entry name" value="TRANSLATIONAL ACTIVATOR OF CYTOCHROME C OXIDASE 1"/>
    <property type="match status" value="1"/>
</dbReference>
<dbReference type="PANTHER" id="PTHR12532:SF0">
    <property type="entry name" value="TRANSLATIONAL ACTIVATOR OF CYTOCHROME C OXIDASE 1"/>
    <property type="match status" value="1"/>
</dbReference>
<dbReference type="Pfam" id="PF20772">
    <property type="entry name" value="TACO1_YebC_N"/>
    <property type="match status" value="1"/>
</dbReference>
<dbReference type="Pfam" id="PF01709">
    <property type="entry name" value="Transcrip_reg"/>
    <property type="match status" value="1"/>
</dbReference>
<dbReference type="SUPFAM" id="SSF75625">
    <property type="entry name" value="YebC-like"/>
    <property type="match status" value="1"/>
</dbReference>
<gene>
    <name type="ordered locus">Aasi_0624</name>
</gene>
<protein>
    <recommendedName>
        <fullName evidence="1">Probable transcriptional regulatory protein Aasi_0624</fullName>
    </recommendedName>
</protein>
<evidence type="ECO:0000255" key="1">
    <source>
        <dbReference type="HAMAP-Rule" id="MF_00693"/>
    </source>
</evidence>
<feature type="chain" id="PRO_1000132148" description="Probable transcriptional regulatory protein Aasi_0624">
    <location>
        <begin position="1"/>
        <end position="244"/>
    </location>
</feature>
<keyword id="KW-0963">Cytoplasm</keyword>
<keyword id="KW-0238">DNA-binding</keyword>
<keyword id="KW-1185">Reference proteome</keyword>
<keyword id="KW-0804">Transcription</keyword>
<keyword id="KW-0805">Transcription regulation</keyword>